<accession>A3LV40</accession>
<evidence type="ECO:0000250" key="1"/>
<evidence type="ECO:0000255" key="2">
    <source>
        <dbReference type="PROSITE-ProRule" id="PRU00541"/>
    </source>
</evidence>
<evidence type="ECO:0000255" key="3">
    <source>
        <dbReference type="PROSITE-ProRule" id="PRU00542"/>
    </source>
</evidence>
<evidence type="ECO:0000256" key="4">
    <source>
        <dbReference type="SAM" id="MobiDB-lite"/>
    </source>
</evidence>
<evidence type="ECO:0000305" key="5"/>
<sequence length="581" mass="66365">MSTTSASEAYVDDNSSWDSFHLDARLVQAIDQLGFEHPTLIQASAIPLALEEKRDIIAKASTGSGKTGAYVIPIIHNLLTDAEVESGNHHIKSIILVPTRELSNQVLQFVEKLLVYSNNRINAINLSANLSDQVVNSLLMNKPEIIISTPAKLIQVLEKNANKDLIDLSTVRNLTIDEVDLVLSYGYLEDLQKLETYLPIKKNLQTFLMSATVNDDLNDLKTRFCSRPAILKLNDEESAQNKLIQYYARTTEFDKFLLAYVIFKLNLIKGKTLVFVNNIDRGYRLKLFLEQFGIRCCILNSELPINSRLHIVEEYNKNVYNLLIATDETNDFTVEKDEQQQEESQDKKASSAKTKQSKKSKKQKKDTEYGVSRGVDFRNVACVLNFDLPTTSKAYIHRIGRTARAGKAGMALSFVLPIKEVGKHKTASLSTAKKDEKILRRIVKQQSKNGFEIKPYQFDMKQVEGFRYRSEDAFRAVTQTAIREARIKELKNELINSDKLKRFFEENPQDLASLRHDKELHPTRVQSHLKRVPDYLLPESARQDPKKIGFVPFHKNKVHKNRKKKPTGRKADPLKSFKNRK</sequence>
<comment type="function">
    <text evidence="1">ATP-binding RNA helicase involved in the biogenesis of 60S ribosomal subunits and is required for the normal formation of 25S and 5.8S rRNAs.</text>
</comment>
<comment type="catalytic activity">
    <reaction>
        <text>ATP + H2O = ADP + phosphate + H(+)</text>
        <dbReference type="Rhea" id="RHEA:13065"/>
        <dbReference type="ChEBI" id="CHEBI:15377"/>
        <dbReference type="ChEBI" id="CHEBI:15378"/>
        <dbReference type="ChEBI" id="CHEBI:30616"/>
        <dbReference type="ChEBI" id="CHEBI:43474"/>
        <dbReference type="ChEBI" id="CHEBI:456216"/>
        <dbReference type="EC" id="3.6.4.13"/>
    </reaction>
</comment>
<comment type="subcellular location">
    <subcellularLocation>
        <location evidence="1">Nucleus</location>
        <location evidence="1">Nucleolus</location>
    </subcellularLocation>
</comment>
<comment type="domain">
    <text>The Q motif is unique to and characteristic of the DEAD box family of RNA helicases and controls ATP binding and hydrolysis.</text>
</comment>
<comment type="similarity">
    <text evidence="5">Belongs to the DEAD box helicase family. DDX56/DBP9 subfamily.</text>
</comment>
<gene>
    <name type="primary">DBP9</name>
    <name type="ORF">PICST_84074</name>
</gene>
<name>DBP9_PICST</name>
<proteinExistence type="inferred from homology"/>
<feature type="chain" id="PRO_0000285156" description="ATP-dependent RNA helicase DBP9">
    <location>
        <begin position="1"/>
        <end position="581"/>
    </location>
</feature>
<feature type="domain" description="Helicase ATP-binding" evidence="2">
    <location>
        <begin position="47"/>
        <end position="231"/>
    </location>
</feature>
<feature type="domain" description="Helicase C-terminal" evidence="3">
    <location>
        <begin position="260"/>
        <end position="461"/>
    </location>
</feature>
<feature type="region of interest" description="Disordered" evidence="4">
    <location>
        <begin position="334"/>
        <end position="368"/>
    </location>
</feature>
<feature type="region of interest" description="Disordered" evidence="4">
    <location>
        <begin position="546"/>
        <end position="581"/>
    </location>
</feature>
<feature type="short sequence motif" description="Q motif">
    <location>
        <begin position="15"/>
        <end position="43"/>
    </location>
</feature>
<feature type="short sequence motif" description="DEAD box">
    <location>
        <begin position="177"/>
        <end position="180"/>
    </location>
</feature>
<feature type="compositionally biased region" description="Basic and acidic residues" evidence="4">
    <location>
        <begin position="334"/>
        <end position="349"/>
    </location>
</feature>
<feature type="compositionally biased region" description="Basic residues" evidence="4">
    <location>
        <begin position="355"/>
        <end position="364"/>
    </location>
</feature>
<feature type="compositionally biased region" description="Basic residues" evidence="4">
    <location>
        <begin position="554"/>
        <end position="568"/>
    </location>
</feature>
<feature type="binding site" evidence="2">
    <location>
        <begin position="60"/>
        <end position="67"/>
    </location>
    <ligand>
        <name>ATP</name>
        <dbReference type="ChEBI" id="CHEBI:30616"/>
    </ligand>
</feature>
<dbReference type="EC" id="3.6.4.13"/>
<dbReference type="EMBL" id="CP000499">
    <property type="protein sequence ID" value="ABN66707.1"/>
    <property type="molecule type" value="Genomic_DNA"/>
</dbReference>
<dbReference type="RefSeq" id="XP_001384736.1">
    <property type="nucleotide sequence ID" value="XM_001384699.1"/>
</dbReference>
<dbReference type="SMR" id="A3LV40"/>
<dbReference type="FunCoup" id="A3LV40">
    <property type="interactions" value="1020"/>
</dbReference>
<dbReference type="STRING" id="322104.A3LV40"/>
<dbReference type="GeneID" id="4839681"/>
<dbReference type="KEGG" id="pic:PICST_84074"/>
<dbReference type="eggNOG" id="KOG0346">
    <property type="taxonomic scope" value="Eukaryota"/>
</dbReference>
<dbReference type="HOGENOM" id="CLU_003041_17_1_1"/>
<dbReference type="InParanoid" id="A3LV40"/>
<dbReference type="OMA" id="NASEQCV"/>
<dbReference type="OrthoDB" id="1191041at2759"/>
<dbReference type="Proteomes" id="UP000002258">
    <property type="component" value="Chromosome 5"/>
</dbReference>
<dbReference type="GO" id="GO:0005829">
    <property type="term" value="C:cytosol"/>
    <property type="evidence" value="ECO:0007669"/>
    <property type="project" value="TreeGrafter"/>
</dbReference>
<dbReference type="GO" id="GO:0005730">
    <property type="term" value="C:nucleolus"/>
    <property type="evidence" value="ECO:0007669"/>
    <property type="project" value="UniProtKB-SubCell"/>
</dbReference>
<dbReference type="GO" id="GO:0005524">
    <property type="term" value="F:ATP binding"/>
    <property type="evidence" value="ECO:0007669"/>
    <property type="project" value="UniProtKB-KW"/>
</dbReference>
<dbReference type="GO" id="GO:0016887">
    <property type="term" value="F:ATP hydrolysis activity"/>
    <property type="evidence" value="ECO:0007669"/>
    <property type="project" value="RHEA"/>
</dbReference>
<dbReference type="GO" id="GO:0003678">
    <property type="term" value="F:DNA helicase activity"/>
    <property type="evidence" value="ECO:0007669"/>
    <property type="project" value="EnsemblFungi"/>
</dbReference>
<dbReference type="GO" id="GO:0033677">
    <property type="term" value="F:DNA/RNA helicase activity"/>
    <property type="evidence" value="ECO:0007669"/>
    <property type="project" value="EnsemblFungi"/>
</dbReference>
<dbReference type="GO" id="GO:0003723">
    <property type="term" value="F:RNA binding"/>
    <property type="evidence" value="ECO:0007669"/>
    <property type="project" value="UniProtKB-KW"/>
</dbReference>
<dbReference type="GO" id="GO:0003724">
    <property type="term" value="F:RNA helicase activity"/>
    <property type="evidence" value="ECO:0007669"/>
    <property type="project" value="UniProtKB-EC"/>
</dbReference>
<dbReference type="GO" id="GO:0000463">
    <property type="term" value="P:maturation of LSU-rRNA from tricistronic rRNA transcript (SSU-rRNA, 5.8S rRNA, LSU-rRNA)"/>
    <property type="evidence" value="ECO:0007669"/>
    <property type="project" value="EnsemblFungi"/>
</dbReference>
<dbReference type="CDD" id="cd17961">
    <property type="entry name" value="DEADc_DDX56"/>
    <property type="match status" value="1"/>
</dbReference>
<dbReference type="CDD" id="cd18787">
    <property type="entry name" value="SF2_C_DEAD"/>
    <property type="match status" value="1"/>
</dbReference>
<dbReference type="Gene3D" id="3.40.50.300">
    <property type="entry name" value="P-loop containing nucleotide triphosphate hydrolases"/>
    <property type="match status" value="2"/>
</dbReference>
<dbReference type="InterPro" id="IPR011545">
    <property type="entry name" value="DEAD/DEAH_box_helicase_dom"/>
</dbReference>
<dbReference type="InterPro" id="IPR050079">
    <property type="entry name" value="DEAD_box_RNA_helicase"/>
</dbReference>
<dbReference type="InterPro" id="IPR014001">
    <property type="entry name" value="Helicase_ATP-bd"/>
</dbReference>
<dbReference type="InterPro" id="IPR001650">
    <property type="entry name" value="Helicase_C-like"/>
</dbReference>
<dbReference type="InterPro" id="IPR027417">
    <property type="entry name" value="P-loop_NTPase"/>
</dbReference>
<dbReference type="InterPro" id="IPR014014">
    <property type="entry name" value="RNA_helicase_DEAD_Q_motif"/>
</dbReference>
<dbReference type="PANTHER" id="PTHR47959">
    <property type="entry name" value="ATP-DEPENDENT RNA HELICASE RHLE-RELATED"/>
    <property type="match status" value="1"/>
</dbReference>
<dbReference type="PANTHER" id="PTHR47959:SF21">
    <property type="entry name" value="DEAD-BOX HELICASE 56"/>
    <property type="match status" value="1"/>
</dbReference>
<dbReference type="Pfam" id="PF00270">
    <property type="entry name" value="DEAD"/>
    <property type="match status" value="1"/>
</dbReference>
<dbReference type="Pfam" id="PF00271">
    <property type="entry name" value="Helicase_C"/>
    <property type="match status" value="2"/>
</dbReference>
<dbReference type="SMART" id="SM00487">
    <property type="entry name" value="DEXDc"/>
    <property type="match status" value="1"/>
</dbReference>
<dbReference type="SMART" id="SM00490">
    <property type="entry name" value="HELICc"/>
    <property type="match status" value="1"/>
</dbReference>
<dbReference type="SUPFAM" id="SSF52540">
    <property type="entry name" value="P-loop containing nucleoside triphosphate hydrolases"/>
    <property type="match status" value="2"/>
</dbReference>
<dbReference type="PROSITE" id="PS51192">
    <property type="entry name" value="HELICASE_ATP_BIND_1"/>
    <property type="match status" value="1"/>
</dbReference>
<dbReference type="PROSITE" id="PS51194">
    <property type="entry name" value="HELICASE_CTER"/>
    <property type="match status" value="1"/>
</dbReference>
<dbReference type="PROSITE" id="PS51195">
    <property type="entry name" value="Q_MOTIF"/>
    <property type="match status" value="1"/>
</dbReference>
<organism>
    <name type="scientific">Scheffersomyces stipitis (strain ATCC 58785 / CBS 6054 / NBRC 10063 / NRRL Y-11545)</name>
    <name type="common">Yeast</name>
    <name type="synonym">Pichia stipitis</name>
    <dbReference type="NCBI Taxonomy" id="322104"/>
    <lineage>
        <taxon>Eukaryota</taxon>
        <taxon>Fungi</taxon>
        <taxon>Dikarya</taxon>
        <taxon>Ascomycota</taxon>
        <taxon>Saccharomycotina</taxon>
        <taxon>Pichiomycetes</taxon>
        <taxon>Debaryomycetaceae</taxon>
        <taxon>Scheffersomyces</taxon>
    </lineage>
</organism>
<protein>
    <recommendedName>
        <fullName>ATP-dependent RNA helicase DBP9</fullName>
        <ecNumber>3.6.4.13</ecNumber>
    </recommendedName>
</protein>
<reference key="1">
    <citation type="journal article" date="2007" name="Nat. Biotechnol.">
        <title>Genome sequence of the lignocellulose-bioconverting and xylose-fermenting yeast Pichia stipitis.</title>
        <authorList>
            <person name="Jeffries T.W."/>
            <person name="Grigoriev I.V."/>
            <person name="Grimwood J."/>
            <person name="Laplaza J.M."/>
            <person name="Aerts A."/>
            <person name="Salamov A."/>
            <person name="Schmutz J."/>
            <person name="Lindquist E."/>
            <person name="Dehal P."/>
            <person name="Shapiro H."/>
            <person name="Jin Y.-S."/>
            <person name="Passoth V."/>
            <person name="Richardson P.M."/>
        </authorList>
    </citation>
    <scope>NUCLEOTIDE SEQUENCE [LARGE SCALE GENOMIC DNA]</scope>
    <source>
        <strain>ATCC 58785 / CBS 6054 / NBRC 10063 / NRRL Y-11545</strain>
    </source>
</reference>
<keyword id="KW-0067">ATP-binding</keyword>
<keyword id="KW-0347">Helicase</keyword>
<keyword id="KW-0378">Hydrolase</keyword>
<keyword id="KW-0547">Nucleotide-binding</keyword>
<keyword id="KW-0539">Nucleus</keyword>
<keyword id="KW-1185">Reference proteome</keyword>
<keyword id="KW-0690">Ribosome biogenesis</keyword>
<keyword id="KW-0694">RNA-binding</keyword>
<keyword id="KW-0698">rRNA processing</keyword>